<name>RLP19_ARATH</name>
<accession>Q9ZUK3</accession>
<accession>Q8L7L6</accession>
<feature type="signal peptide" evidence="1">
    <location>
        <begin position="1"/>
        <end position="25"/>
    </location>
</feature>
<feature type="chain" id="PRO_5011951677" description="Receptor-like protein 19">
    <location>
        <begin position="26"/>
        <end position="983"/>
    </location>
</feature>
<feature type="topological domain" description="Extracellular" evidence="1">
    <location>
        <begin position="26"/>
        <end position="937"/>
    </location>
</feature>
<feature type="transmembrane region" description="Helical" evidence="1">
    <location>
        <begin position="938"/>
        <end position="958"/>
    </location>
</feature>
<feature type="topological domain" description="Cytoplasmic" evidence="1">
    <location>
        <begin position="959"/>
        <end position="983"/>
    </location>
</feature>
<feature type="repeat" description="LRR 1" evidence="1">
    <location>
        <begin position="82"/>
        <end position="108"/>
    </location>
</feature>
<feature type="repeat" description="LRR 2" evidence="1">
    <location>
        <begin position="111"/>
        <end position="135"/>
    </location>
</feature>
<feature type="repeat" description="LRR 3" evidence="1">
    <location>
        <begin position="136"/>
        <end position="159"/>
    </location>
</feature>
<feature type="repeat" description="LRR 4" evidence="1">
    <location>
        <begin position="161"/>
        <end position="183"/>
    </location>
</feature>
<feature type="repeat" description="LRR 5" evidence="1">
    <location>
        <begin position="184"/>
        <end position="207"/>
    </location>
</feature>
<feature type="repeat" description="LRR 6" evidence="1">
    <location>
        <begin position="209"/>
        <end position="231"/>
    </location>
</feature>
<feature type="repeat" description="LRR 7" evidence="1">
    <location>
        <begin position="232"/>
        <end position="255"/>
    </location>
</feature>
<feature type="repeat" description="LRR 8" evidence="1">
    <location>
        <begin position="256"/>
        <end position="281"/>
    </location>
</feature>
<feature type="repeat" description="LRR 9" evidence="1">
    <location>
        <begin position="283"/>
        <end position="302"/>
    </location>
</feature>
<feature type="repeat" description="LRR 10" evidence="1">
    <location>
        <begin position="303"/>
        <end position="327"/>
    </location>
</feature>
<feature type="repeat" description="LRR 11" evidence="1">
    <location>
        <begin position="328"/>
        <end position="351"/>
    </location>
</feature>
<feature type="repeat" description="LRR 12" evidence="1">
    <location>
        <begin position="353"/>
        <end position="375"/>
    </location>
</feature>
<feature type="repeat" description="LRR 13" evidence="1">
    <location>
        <begin position="376"/>
        <end position="399"/>
    </location>
</feature>
<feature type="repeat" description="LRR 14" evidence="1">
    <location>
        <begin position="401"/>
        <end position="424"/>
    </location>
</feature>
<feature type="repeat" description="LRR 15" evidence="1">
    <location>
        <begin position="425"/>
        <end position="448"/>
    </location>
</feature>
<feature type="repeat" description="LRR 16" evidence="1">
    <location>
        <begin position="450"/>
        <end position="474"/>
    </location>
</feature>
<feature type="repeat" description="LRR 17" evidence="1">
    <location>
        <begin position="475"/>
        <end position="498"/>
    </location>
</feature>
<feature type="repeat" description="LRR 18" evidence="1">
    <location>
        <begin position="501"/>
        <end position="524"/>
    </location>
</feature>
<feature type="repeat" description="LRR 19" evidence="1">
    <location>
        <begin position="525"/>
        <end position="548"/>
    </location>
</feature>
<feature type="repeat" description="LRR 20" evidence="1">
    <location>
        <begin position="550"/>
        <end position="571"/>
    </location>
</feature>
<feature type="repeat" description="LRR 21" evidence="1">
    <location>
        <begin position="578"/>
        <end position="602"/>
    </location>
</feature>
<feature type="repeat" description="LRR 22" evidence="1">
    <location>
        <begin position="603"/>
        <end position="628"/>
    </location>
</feature>
<feature type="repeat" description="LRR 23" evidence="1">
    <location>
        <begin position="629"/>
        <end position="652"/>
    </location>
</feature>
<feature type="repeat" description="LRR 24" evidence="1">
    <location>
        <begin position="654"/>
        <end position="674"/>
    </location>
</feature>
<feature type="repeat" description="LRR 25" evidence="1">
    <location>
        <begin position="675"/>
        <end position="700"/>
    </location>
</feature>
<feature type="repeat" description="LRR 26" evidence="1">
    <location>
        <begin position="702"/>
        <end position="720"/>
    </location>
</feature>
<feature type="repeat" description="LRR 27" evidence="1">
    <location>
        <begin position="721"/>
        <end position="744"/>
    </location>
</feature>
<feature type="repeat" description="LRR 28" evidence="1">
    <location>
        <begin position="793"/>
        <end position="817"/>
    </location>
</feature>
<feature type="repeat" description="LRR 29" evidence="1">
    <location>
        <begin position="818"/>
        <end position="840"/>
    </location>
</feature>
<feature type="repeat" description="LRR 30" evidence="1">
    <location>
        <begin position="841"/>
        <end position="865"/>
    </location>
</feature>
<feature type="repeat" description="LRR 31" evidence="1">
    <location>
        <begin position="867"/>
        <end position="890"/>
    </location>
</feature>
<feature type="glycosylation site" description="N-linked (GlcNAc...) asparagine" evidence="2">
    <location>
        <position position="66"/>
    </location>
</feature>
<feature type="glycosylation site" description="N-linked (GlcNAc...) asparagine" evidence="2">
    <location>
        <position position="102"/>
    </location>
</feature>
<feature type="glycosylation site" description="N-linked (GlcNAc...) asparagine" evidence="2">
    <location>
        <position position="137"/>
    </location>
</feature>
<feature type="glycosylation site" description="N-linked (GlcNAc...) asparagine" evidence="2">
    <location>
        <position position="158"/>
    </location>
</feature>
<feature type="glycosylation site" description="N-linked (GlcNAc...) asparagine" evidence="2">
    <location>
        <position position="171"/>
    </location>
</feature>
<feature type="glycosylation site" description="N-linked (GlcNAc...) asparagine" evidence="2">
    <location>
        <position position="190"/>
    </location>
</feature>
<feature type="glycosylation site" description="N-linked (GlcNAc...) asparagine" evidence="2">
    <location>
        <position position="195"/>
    </location>
</feature>
<feature type="glycosylation site" description="N-linked (GlcNAc...) asparagine" evidence="2">
    <location>
        <position position="206"/>
    </location>
</feature>
<feature type="glycosylation site" description="N-linked (GlcNAc...) asparagine" evidence="2">
    <location>
        <position position="254"/>
    </location>
</feature>
<feature type="glycosylation site" description="N-linked (GlcNAc...) asparagine" evidence="2">
    <location>
        <position position="278"/>
    </location>
</feature>
<feature type="glycosylation site" description="N-linked (GlcNAc...) asparagine" evidence="2">
    <location>
        <position position="347"/>
    </location>
</feature>
<feature type="glycosylation site" description="N-linked (GlcNAc...) asparagine" evidence="2">
    <location>
        <position position="389"/>
    </location>
</feature>
<feature type="glycosylation site" description="N-linked (GlcNAc...) asparagine" evidence="2">
    <location>
        <position position="396"/>
    </location>
</feature>
<feature type="glycosylation site" description="N-linked (GlcNAc...) asparagine" evidence="2">
    <location>
        <position position="402"/>
    </location>
</feature>
<feature type="glycosylation site" description="N-linked (GlcNAc...) asparagine" evidence="2">
    <location>
        <position position="456"/>
    </location>
</feature>
<feature type="glycosylation site" description="N-linked (GlcNAc...) asparagine" evidence="2">
    <location>
        <position position="461"/>
    </location>
</feature>
<feature type="glycosylation site" description="N-linked (GlcNAc...) asparagine" evidence="2">
    <location>
        <position position="492"/>
    </location>
</feature>
<feature type="glycosylation site" description="N-linked (GlcNAc...) asparagine" evidence="2">
    <location>
        <position position="498"/>
    </location>
</feature>
<feature type="glycosylation site" description="N-linked (GlcNAc...) asparagine" evidence="2">
    <location>
        <position position="555"/>
    </location>
</feature>
<feature type="glycosylation site" description="N-linked (GlcNAc...) asparagine" evidence="2">
    <location>
        <position position="558"/>
    </location>
</feature>
<feature type="glycosylation site" description="N-linked (GlcNAc...) asparagine" evidence="2">
    <location>
        <position position="590"/>
    </location>
</feature>
<feature type="glycosylation site" description="N-linked (GlcNAc...) asparagine" evidence="2">
    <location>
        <position position="616"/>
    </location>
</feature>
<feature type="glycosylation site" description="N-linked (GlcNAc...) asparagine" evidence="2">
    <location>
        <position position="734"/>
    </location>
</feature>
<feature type="glycosylation site" description="N-linked (GlcNAc...) asparagine" evidence="2">
    <location>
        <position position="744"/>
    </location>
</feature>
<feature type="glycosylation site" description="N-linked (GlcNAc...) asparagine" evidence="2">
    <location>
        <position position="824"/>
    </location>
</feature>
<feature type="glycosylation site" description="N-linked (GlcNAc...) asparagine" evidence="2">
    <location>
        <position position="872"/>
    </location>
</feature>
<feature type="sequence conflict" description="In Ref. 3; AAM91588." evidence="4" ref="3">
    <original>P</original>
    <variation>T</variation>
    <location>
        <position position="345"/>
    </location>
</feature>
<comment type="subcellular location">
    <subcellularLocation>
        <location evidence="4">Cell membrane</location>
        <topology evidence="4">Single-pass type I membrane protein</topology>
    </subcellularLocation>
</comment>
<comment type="similarity">
    <text evidence="4">Belongs to the RLP family.</text>
</comment>
<evidence type="ECO:0000255" key="1"/>
<evidence type="ECO:0000255" key="2">
    <source>
        <dbReference type="PROSITE-ProRule" id="PRU00498"/>
    </source>
</evidence>
<evidence type="ECO:0000303" key="3">
    <source>
    </source>
</evidence>
<evidence type="ECO:0000305" key="4"/>
<evidence type="ECO:0000312" key="5">
    <source>
        <dbReference type="Araport" id="AT2G15080"/>
    </source>
</evidence>
<evidence type="ECO:0000312" key="6">
    <source>
        <dbReference type="EMBL" id="AAD03365.1"/>
    </source>
</evidence>
<keyword id="KW-1003">Cell membrane</keyword>
<keyword id="KW-0325">Glycoprotein</keyword>
<keyword id="KW-0433">Leucine-rich repeat</keyword>
<keyword id="KW-0472">Membrane</keyword>
<keyword id="KW-0675">Receptor</keyword>
<keyword id="KW-1185">Reference proteome</keyword>
<keyword id="KW-0677">Repeat</keyword>
<keyword id="KW-0732">Signal</keyword>
<keyword id="KW-0812">Transmembrane</keyword>
<keyword id="KW-1133">Transmembrane helix</keyword>
<reference key="1">
    <citation type="journal article" date="1999" name="Nature">
        <title>Sequence and analysis of chromosome 2 of the plant Arabidopsis thaliana.</title>
        <authorList>
            <person name="Lin X."/>
            <person name="Kaul S."/>
            <person name="Rounsley S.D."/>
            <person name="Shea T.P."/>
            <person name="Benito M.-I."/>
            <person name="Town C.D."/>
            <person name="Fujii C.Y."/>
            <person name="Mason T.M."/>
            <person name="Bowman C.L."/>
            <person name="Barnstead M.E."/>
            <person name="Feldblyum T.V."/>
            <person name="Buell C.R."/>
            <person name="Ketchum K.A."/>
            <person name="Lee J.J."/>
            <person name="Ronning C.M."/>
            <person name="Koo H.L."/>
            <person name="Moffat K.S."/>
            <person name="Cronin L.A."/>
            <person name="Shen M."/>
            <person name="Pai G."/>
            <person name="Van Aken S."/>
            <person name="Umayam L."/>
            <person name="Tallon L.J."/>
            <person name="Gill J.E."/>
            <person name="Adams M.D."/>
            <person name="Carrera A.J."/>
            <person name="Creasy T.H."/>
            <person name="Goodman H.M."/>
            <person name="Somerville C.R."/>
            <person name="Copenhaver G.P."/>
            <person name="Preuss D."/>
            <person name="Nierman W.C."/>
            <person name="White O."/>
            <person name="Eisen J.A."/>
            <person name="Salzberg S.L."/>
            <person name="Fraser C.M."/>
            <person name="Venter J.C."/>
        </authorList>
    </citation>
    <scope>NUCLEOTIDE SEQUENCE [LARGE SCALE GENOMIC DNA]</scope>
    <source>
        <strain>cv. Columbia</strain>
    </source>
</reference>
<reference key="2">
    <citation type="journal article" date="2017" name="Plant J.">
        <title>Araport11: a complete reannotation of the Arabidopsis thaliana reference genome.</title>
        <authorList>
            <person name="Cheng C.Y."/>
            <person name="Krishnakumar V."/>
            <person name="Chan A.P."/>
            <person name="Thibaud-Nissen F."/>
            <person name="Schobel S."/>
            <person name="Town C.D."/>
        </authorList>
    </citation>
    <scope>GENOME REANNOTATION</scope>
    <source>
        <strain>cv. Columbia</strain>
    </source>
</reference>
<reference key="3">
    <citation type="journal article" date="2003" name="Science">
        <title>Empirical analysis of transcriptional activity in the Arabidopsis genome.</title>
        <authorList>
            <person name="Yamada K."/>
            <person name="Lim J."/>
            <person name="Dale J.M."/>
            <person name="Chen H."/>
            <person name="Shinn P."/>
            <person name="Palm C.J."/>
            <person name="Southwick A.M."/>
            <person name="Wu H.C."/>
            <person name="Kim C.J."/>
            <person name="Nguyen M."/>
            <person name="Pham P.K."/>
            <person name="Cheuk R.F."/>
            <person name="Karlin-Newmann G."/>
            <person name="Liu S.X."/>
            <person name="Lam B."/>
            <person name="Sakano H."/>
            <person name="Wu T."/>
            <person name="Yu G."/>
            <person name="Miranda M."/>
            <person name="Quach H.L."/>
            <person name="Tripp M."/>
            <person name="Chang C.H."/>
            <person name="Lee J.M."/>
            <person name="Toriumi M.J."/>
            <person name="Chan M.M."/>
            <person name="Tang C.C."/>
            <person name="Onodera C.S."/>
            <person name="Deng J.M."/>
            <person name="Akiyama K."/>
            <person name="Ansari Y."/>
            <person name="Arakawa T."/>
            <person name="Banh J."/>
            <person name="Banno F."/>
            <person name="Bowser L."/>
            <person name="Brooks S.Y."/>
            <person name="Carninci P."/>
            <person name="Chao Q."/>
            <person name="Choy N."/>
            <person name="Enju A."/>
            <person name="Goldsmith A.D."/>
            <person name="Gurjal M."/>
            <person name="Hansen N.F."/>
            <person name="Hayashizaki Y."/>
            <person name="Johnson-Hopson C."/>
            <person name="Hsuan V.W."/>
            <person name="Iida K."/>
            <person name="Karnes M."/>
            <person name="Khan S."/>
            <person name="Koesema E."/>
            <person name="Ishida J."/>
            <person name="Jiang P.X."/>
            <person name="Jones T."/>
            <person name="Kawai J."/>
            <person name="Kamiya A."/>
            <person name="Meyers C."/>
            <person name="Nakajima M."/>
            <person name="Narusaka M."/>
            <person name="Seki M."/>
            <person name="Sakurai T."/>
            <person name="Satou M."/>
            <person name="Tamse R."/>
            <person name="Vaysberg M."/>
            <person name="Wallender E.K."/>
            <person name="Wong C."/>
            <person name="Yamamura Y."/>
            <person name="Yuan S."/>
            <person name="Shinozaki K."/>
            <person name="Davis R.W."/>
            <person name="Theologis A."/>
            <person name="Ecker J.R."/>
        </authorList>
    </citation>
    <scope>NUCLEOTIDE SEQUENCE [LARGE SCALE MRNA]</scope>
    <source>
        <strain>cv. Columbia</strain>
    </source>
</reference>
<reference key="4">
    <citation type="journal article" date="2005" name="Plant Physiol.">
        <title>Phylogenomic analysis of the receptor-like proteins of rice and Arabidopsis.</title>
        <authorList>
            <person name="Fritz-Laylin L.K."/>
            <person name="Krishnamurthy N."/>
            <person name="Toer M."/>
            <person name="Sjoelander K.V."/>
            <person name="Jones J.D."/>
        </authorList>
    </citation>
    <scope>GENE FAMILY</scope>
</reference>
<reference key="5">
    <citation type="journal article" date="2008" name="Plant Physiol.">
        <title>A genome-wide functional investigation into the roles of receptor-like proteins in Arabidopsis.</title>
        <authorList>
            <person name="Wang G."/>
            <person name="Ellendorff U."/>
            <person name="Kemp B."/>
            <person name="Mansfield J.W."/>
            <person name="Forsyth A."/>
            <person name="Mitchell K."/>
            <person name="Bastas K."/>
            <person name="Liu C.-M."/>
            <person name="Woods-Toer A."/>
            <person name="Zipfel C."/>
            <person name="de Wit P.J.G.M."/>
            <person name="Jones J.D.G."/>
            <person name="Toer M."/>
            <person name="Thomma B.P.H.J."/>
        </authorList>
    </citation>
    <scope>GENE FAMILY</scope>
    <scope>NOMENCLATURE</scope>
</reference>
<sequence>MMKGYITLSFLIILIFNFLDEFAASTRHLCDPDQSDAILEFKNEFETLEESCFDSNIPLKTESWTNNSDCCYWDGIKCDAKFGDVIELDLSFSCLRGQLNSNSSLFRLPQLRFLTTLDLSNNDFIGQIPSSLETLSNLTTLDLSRNHFSGRIPSSIGNLSHLIFVDFSHNNFSGQIPSSLGYLSHLTSFNLSYNNFSGRVPSSIGNLSYLTTLRLSRNSFFGELPSSLGSLFHLTDLILDTNHFVGKIPSSLGNLSHLTSIDLHKNNFVGEIPFSLGNLSCLTSFILSDNNIVGEIPSSFGNLNQLDILNVKSNKLSGSFPIALLNLRKLSTLSLFNNRLTGTLPSNMSSLSNLKLFDATENHFTGPLPSSLFNIPSLKTITLENNQLNGSLGFGNISSYSNLTVLRLGNNNFRGPIHRSISKLVNLKELDLSNYNTQGLVDFTIFSHLKSIEYLNLSHLNTTTTIDMYEILSSFKLLDTLDLSGSHVSTTNKSSLSNSSLVLISQLYLSGCGITEFPKFLRSQELMLTLDISNNKIKGQVPGWLWMLPVLNYVNLSNNTFIGFERSTKLGLTSIQEPPAMRQLFCSNNNFTGNIPSFICELPYLSTLDFSNNKFNGSIPTCMGNIQSPYLQALNLRHNRLSGLLPENIFESLISLDVGHNQLVGKLPRSLSHISSLGLLNVESNKISDTFPLWLSSLQELQVLVLRSNAFYGPIEKTQFSKLRIIDISGNQFNGTLPANFFVNWTAMFSLDENEDQSNGETMSNMYMSTDYFYFDSMVLMNKGVEMELERVLKVFTVIDFSGNKFEGEIPKSIGLLKELHVLNLSNNALSGHIASSMGNLMALESLDVSQNKLSGEIPQELGKLTYLAYMNFSHNQLVGLLPGGTQFQTQKCSSFEDNHGLYGPSLEKICDIHGKTPQQSDMAPEPEEDEEEVISWIAAVIGFILGTALGLTFGCILFSYKPDWFKNPFVRDKRRNIGTITH</sequence>
<dbReference type="EMBL" id="AC005957">
    <property type="protein sequence ID" value="AAD03365.1"/>
    <property type="molecule type" value="Genomic_DNA"/>
</dbReference>
<dbReference type="EMBL" id="CP002685">
    <property type="protein sequence ID" value="AEC06367.1"/>
    <property type="molecule type" value="Genomic_DNA"/>
</dbReference>
<dbReference type="EMBL" id="CP002685">
    <property type="protein sequence ID" value="AEC06368.1"/>
    <property type="molecule type" value="Genomic_DNA"/>
</dbReference>
<dbReference type="EMBL" id="AY128385">
    <property type="protein sequence ID" value="AAM91588.1"/>
    <property type="molecule type" value="mRNA"/>
</dbReference>
<dbReference type="PIR" id="G84524">
    <property type="entry name" value="G84524"/>
</dbReference>
<dbReference type="RefSeq" id="NP_179112.1">
    <property type="nucleotide sequence ID" value="NM_127070.3"/>
</dbReference>
<dbReference type="RefSeq" id="NP_849957.1">
    <property type="nucleotide sequence ID" value="NM_179626.1"/>
</dbReference>
<dbReference type="SMR" id="Q9ZUK3"/>
<dbReference type="FunCoup" id="Q9ZUK3">
    <property type="interactions" value="98"/>
</dbReference>
<dbReference type="IntAct" id="Q9ZUK3">
    <property type="interactions" value="1"/>
</dbReference>
<dbReference type="GlyCosmos" id="Q9ZUK3">
    <property type="glycosylation" value="26 sites, No reported glycans"/>
</dbReference>
<dbReference type="GlyGen" id="Q9ZUK3">
    <property type="glycosylation" value="26 sites"/>
</dbReference>
<dbReference type="PaxDb" id="3702-AT2G15080.2"/>
<dbReference type="ProteomicsDB" id="228163"/>
<dbReference type="EnsemblPlants" id="AT2G15080.1">
    <property type="protein sequence ID" value="AT2G15080.1"/>
    <property type="gene ID" value="AT2G15080"/>
</dbReference>
<dbReference type="EnsemblPlants" id="AT2G15080.2">
    <property type="protein sequence ID" value="AT2G15080.2"/>
    <property type="gene ID" value="AT2G15080"/>
</dbReference>
<dbReference type="GeneID" id="815997"/>
<dbReference type="Gramene" id="AT2G15080.1">
    <property type="protein sequence ID" value="AT2G15080.1"/>
    <property type="gene ID" value="AT2G15080"/>
</dbReference>
<dbReference type="Gramene" id="AT2G15080.2">
    <property type="protein sequence ID" value="AT2G15080.2"/>
    <property type="gene ID" value="AT2G15080"/>
</dbReference>
<dbReference type="KEGG" id="ath:AT2G15080"/>
<dbReference type="Araport" id="AT2G15080"/>
<dbReference type="TAIR" id="AT2G15080">
    <property type="gene designation" value="RLP19"/>
</dbReference>
<dbReference type="eggNOG" id="KOG0619">
    <property type="taxonomic scope" value="Eukaryota"/>
</dbReference>
<dbReference type="HOGENOM" id="CLU_000288_18_3_1"/>
<dbReference type="InParanoid" id="Q9ZUK3"/>
<dbReference type="OMA" id="DIHTTTW"/>
<dbReference type="PhylomeDB" id="Q9ZUK3"/>
<dbReference type="PRO" id="PR:Q9ZUK3"/>
<dbReference type="Proteomes" id="UP000006548">
    <property type="component" value="Chromosome 2"/>
</dbReference>
<dbReference type="ExpressionAtlas" id="Q9ZUK3">
    <property type="expression patterns" value="baseline and differential"/>
</dbReference>
<dbReference type="GO" id="GO:0005886">
    <property type="term" value="C:plasma membrane"/>
    <property type="evidence" value="ECO:0007669"/>
    <property type="project" value="UniProtKB-SubCell"/>
</dbReference>
<dbReference type="FunFam" id="3.80.10.10:FF:000041">
    <property type="entry name" value="LRR receptor-like serine/threonine-protein kinase ERECTA"/>
    <property type="match status" value="1"/>
</dbReference>
<dbReference type="FunFam" id="3.80.10.10:FF:000111">
    <property type="entry name" value="LRR receptor-like serine/threonine-protein kinase ERECTA"/>
    <property type="match status" value="1"/>
</dbReference>
<dbReference type="FunFam" id="3.80.10.10:FF:000095">
    <property type="entry name" value="LRR receptor-like serine/threonine-protein kinase GSO1"/>
    <property type="match status" value="2"/>
</dbReference>
<dbReference type="Gene3D" id="3.80.10.10">
    <property type="entry name" value="Ribonuclease Inhibitor"/>
    <property type="match status" value="6"/>
</dbReference>
<dbReference type="InterPro" id="IPR001611">
    <property type="entry name" value="Leu-rich_rpt"/>
</dbReference>
<dbReference type="InterPro" id="IPR003591">
    <property type="entry name" value="Leu-rich_rpt_typical-subtyp"/>
</dbReference>
<dbReference type="InterPro" id="IPR032675">
    <property type="entry name" value="LRR_dom_sf"/>
</dbReference>
<dbReference type="InterPro" id="IPR013210">
    <property type="entry name" value="LRR_N_plant-typ"/>
</dbReference>
<dbReference type="InterPro" id="IPR055414">
    <property type="entry name" value="LRR_R13L4/SHOC2-like"/>
</dbReference>
<dbReference type="InterPro" id="IPR052941">
    <property type="entry name" value="StomDev_PlantInt_Reg"/>
</dbReference>
<dbReference type="PANTHER" id="PTHR48004">
    <property type="entry name" value="OS01G0149700 PROTEIN"/>
    <property type="match status" value="1"/>
</dbReference>
<dbReference type="PANTHER" id="PTHR48004:SF103">
    <property type="entry name" value="OS01G0515300 PROTEIN"/>
    <property type="match status" value="1"/>
</dbReference>
<dbReference type="Pfam" id="PF00560">
    <property type="entry name" value="LRR_1"/>
    <property type="match status" value="11"/>
</dbReference>
<dbReference type="Pfam" id="PF23598">
    <property type="entry name" value="LRR_14"/>
    <property type="match status" value="1"/>
</dbReference>
<dbReference type="Pfam" id="PF08263">
    <property type="entry name" value="LRRNT_2"/>
    <property type="match status" value="1"/>
</dbReference>
<dbReference type="SMART" id="SM00369">
    <property type="entry name" value="LRR_TYP"/>
    <property type="match status" value="7"/>
</dbReference>
<dbReference type="SUPFAM" id="SSF52058">
    <property type="entry name" value="L domain-like"/>
    <property type="match status" value="2"/>
</dbReference>
<dbReference type="SUPFAM" id="SSF52047">
    <property type="entry name" value="RNI-like"/>
    <property type="match status" value="1"/>
</dbReference>
<gene>
    <name evidence="3" type="primary">RLP19</name>
    <name evidence="5" type="ordered locus">At2g15080</name>
    <name evidence="6" type="ORF">T15J14.12</name>
</gene>
<organism>
    <name type="scientific">Arabidopsis thaliana</name>
    <name type="common">Mouse-ear cress</name>
    <dbReference type="NCBI Taxonomy" id="3702"/>
    <lineage>
        <taxon>Eukaryota</taxon>
        <taxon>Viridiplantae</taxon>
        <taxon>Streptophyta</taxon>
        <taxon>Embryophyta</taxon>
        <taxon>Tracheophyta</taxon>
        <taxon>Spermatophyta</taxon>
        <taxon>Magnoliopsida</taxon>
        <taxon>eudicotyledons</taxon>
        <taxon>Gunneridae</taxon>
        <taxon>Pentapetalae</taxon>
        <taxon>rosids</taxon>
        <taxon>malvids</taxon>
        <taxon>Brassicales</taxon>
        <taxon>Brassicaceae</taxon>
        <taxon>Camelineae</taxon>
        <taxon>Arabidopsis</taxon>
    </lineage>
</organism>
<protein>
    <recommendedName>
        <fullName evidence="3">Receptor-like protein 19</fullName>
        <shortName evidence="3">AtRLP19</shortName>
    </recommendedName>
</protein>
<proteinExistence type="evidence at transcript level"/>